<feature type="chain" id="PRO_1000052639" description="Large ribosomal subunit protein uL22">
    <location>
        <begin position="1"/>
        <end position="119"/>
    </location>
</feature>
<comment type="function">
    <text evidence="1">This protein binds specifically to 23S rRNA; its binding is stimulated by other ribosomal proteins, e.g. L4, L17, and L20. It is important during the early stages of 50S assembly. It makes multiple contacts with different domains of the 23S rRNA in the assembled 50S subunit and ribosome (By similarity).</text>
</comment>
<comment type="function">
    <text evidence="1">The globular domain of the protein is located near the polypeptide exit tunnel on the outside of the subunit, while an extended beta-hairpin is found that lines the wall of the exit tunnel in the center of the 70S ribosome.</text>
</comment>
<comment type="subunit">
    <text evidence="1">Part of the 50S ribosomal subunit.</text>
</comment>
<comment type="similarity">
    <text evidence="1">Belongs to the universal ribosomal protein uL22 family.</text>
</comment>
<reference key="1">
    <citation type="submission" date="2007-09" db="EMBL/GenBank/DDBJ databases">
        <title>Complete genome sequence of Rickettsia canadensis.</title>
        <authorList>
            <person name="Madan A."/>
            <person name="Fahey J."/>
            <person name="Helton E."/>
            <person name="Ketteman M."/>
            <person name="Madan A."/>
            <person name="Rodrigues S."/>
            <person name="Sanchez A."/>
            <person name="Whiting M."/>
            <person name="Dasch G."/>
            <person name="Eremeeva M."/>
        </authorList>
    </citation>
    <scope>NUCLEOTIDE SEQUENCE [LARGE SCALE GENOMIC DNA]</scope>
    <source>
        <strain>McKiel</strain>
    </source>
</reference>
<name>RL22_RICCK</name>
<evidence type="ECO:0000255" key="1">
    <source>
        <dbReference type="HAMAP-Rule" id="MF_01331"/>
    </source>
</evidence>
<evidence type="ECO:0000305" key="2"/>
<sequence length="119" mass="13263">MVQENKNFATAKAKSIRVSPRKLNLVAAFIRNMKVSEALVQLTFSPKRIAKVVKTCLQSAIANAENNLGLDIDRLVVTKATVGKALVMKRVMPRAKGRATRINKFFSNLYITVTEKEDN</sequence>
<dbReference type="EMBL" id="CP000409">
    <property type="protein sequence ID" value="ABV73794.1"/>
    <property type="molecule type" value="Genomic_DNA"/>
</dbReference>
<dbReference type="RefSeq" id="WP_012148989.1">
    <property type="nucleotide sequence ID" value="NC_009879.1"/>
</dbReference>
<dbReference type="SMR" id="A8EZL1"/>
<dbReference type="STRING" id="293613.A1E_04345"/>
<dbReference type="KEGG" id="rcm:A1E_04345"/>
<dbReference type="eggNOG" id="COG0091">
    <property type="taxonomic scope" value="Bacteria"/>
</dbReference>
<dbReference type="HOGENOM" id="CLU_083987_3_0_5"/>
<dbReference type="Proteomes" id="UP000007056">
    <property type="component" value="Chromosome"/>
</dbReference>
<dbReference type="GO" id="GO:0022625">
    <property type="term" value="C:cytosolic large ribosomal subunit"/>
    <property type="evidence" value="ECO:0007669"/>
    <property type="project" value="TreeGrafter"/>
</dbReference>
<dbReference type="GO" id="GO:0019843">
    <property type="term" value="F:rRNA binding"/>
    <property type="evidence" value="ECO:0007669"/>
    <property type="project" value="UniProtKB-UniRule"/>
</dbReference>
<dbReference type="GO" id="GO:0003735">
    <property type="term" value="F:structural constituent of ribosome"/>
    <property type="evidence" value="ECO:0007669"/>
    <property type="project" value="InterPro"/>
</dbReference>
<dbReference type="GO" id="GO:0006412">
    <property type="term" value="P:translation"/>
    <property type="evidence" value="ECO:0007669"/>
    <property type="project" value="UniProtKB-UniRule"/>
</dbReference>
<dbReference type="CDD" id="cd00336">
    <property type="entry name" value="Ribosomal_L22"/>
    <property type="match status" value="1"/>
</dbReference>
<dbReference type="Gene3D" id="3.90.470.10">
    <property type="entry name" value="Ribosomal protein L22/L17"/>
    <property type="match status" value="1"/>
</dbReference>
<dbReference type="HAMAP" id="MF_01331_B">
    <property type="entry name" value="Ribosomal_uL22_B"/>
    <property type="match status" value="1"/>
</dbReference>
<dbReference type="InterPro" id="IPR001063">
    <property type="entry name" value="Ribosomal_uL22"/>
</dbReference>
<dbReference type="InterPro" id="IPR005727">
    <property type="entry name" value="Ribosomal_uL22_bac/chlpt-type"/>
</dbReference>
<dbReference type="InterPro" id="IPR047867">
    <property type="entry name" value="Ribosomal_uL22_bac/org-type"/>
</dbReference>
<dbReference type="InterPro" id="IPR018260">
    <property type="entry name" value="Ribosomal_uL22_CS"/>
</dbReference>
<dbReference type="InterPro" id="IPR036394">
    <property type="entry name" value="Ribosomal_uL22_sf"/>
</dbReference>
<dbReference type="NCBIfam" id="TIGR01044">
    <property type="entry name" value="rplV_bact"/>
    <property type="match status" value="1"/>
</dbReference>
<dbReference type="PANTHER" id="PTHR13501">
    <property type="entry name" value="CHLOROPLAST 50S RIBOSOMAL PROTEIN L22-RELATED"/>
    <property type="match status" value="1"/>
</dbReference>
<dbReference type="PANTHER" id="PTHR13501:SF8">
    <property type="entry name" value="LARGE RIBOSOMAL SUBUNIT PROTEIN UL22M"/>
    <property type="match status" value="1"/>
</dbReference>
<dbReference type="Pfam" id="PF00237">
    <property type="entry name" value="Ribosomal_L22"/>
    <property type="match status" value="1"/>
</dbReference>
<dbReference type="SUPFAM" id="SSF54843">
    <property type="entry name" value="Ribosomal protein L22"/>
    <property type="match status" value="1"/>
</dbReference>
<dbReference type="PROSITE" id="PS00464">
    <property type="entry name" value="RIBOSOMAL_L22"/>
    <property type="match status" value="1"/>
</dbReference>
<protein>
    <recommendedName>
        <fullName evidence="1">Large ribosomal subunit protein uL22</fullName>
    </recommendedName>
    <alternativeName>
        <fullName evidence="2">50S ribosomal protein L22</fullName>
    </alternativeName>
</protein>
<proteinExistence type="inferred from homology"/>
<gene>
    <name evidence="1" type="primary">rplV</name>
    <name type="ordered locus">A1E_04345</name>
</gene>
<keyword id="KW-0687">Ribonucleoprotein</keyword>
<keyword id="KW-0689">Ribosomal protein</keyword>
<keyword id="KW-0694">RNA-binding</keyword>
<keyword id="KW-0699">rRNA-binding</keyword>
<organism>
    <name type="scientific">Rickettsia canadensis (strain McKiel)</name>
    <dbReference type="NCBI Taxonomy" id="293613"/>
    <lineage>
        <taxon>Bacteria</taxon>
        <taxon>Pseudomonadati</taxon>
        <taxon>Pseudomonadota</taxon>
        <taxon>Alphaproteobacteria</taxon>
        <taxon>Rickettsiales</taxon>
        <taxon>Rickettsiaceae</taxon>
        <taxon>Rickettsieae</taxon>
        <taxon>Rickettsia</taxon>
        <taxon>belli group</taxon>
    </lineage>
</organism>
<accession>A8EZL1</accession>